<accession>Q82ZM8</accession>
<organism evidence="10 11">
    <name type="scientific">Enterococcus faecalis (strain ATCC 700802 / V583)</name>
    <dbReference type="NCBI Taxonomy" id="226185"/>
    <lineage>
        <taxon>Bacteria</taxon>
        <taxon>Bacillati</taxon>
        <taxon>Bacillota</taxon>
        <taxon>Bacilli</taxon>
        <taxon>Lactobacillales</taxon>
        <taxon>Enterococcaceae</taxon>
        <taxon>Enterococcus</taxon>
    </lineage>
</organism>
<comment type="function">
    <text evidence="6">Has a very modest degradation activity against heparin sodium salt (HS) in vitro. Involved in the pathogenesis of vancomycin-resistant E.faecalis infections.</text>
</comment>
<comment type="subcellular location">
    <subcellularLocation>
        <location evidence="4 9">Secreted</location>
        <location evidence="4 9">Cell wall</location>
        <topology evidence="4 9">Peptidoglycan-anchor</topology>
    </subcellularLocation>
</comment>
<comment type="induction">
    <text evidence="6">Expression is up-regulated by 5 kDa hyaluronic acid (HA) in vancomycin-resistant strain V587 cultured in human urine.</text>
</comment>
<comment type="disruption phenotype">
    <text evidence="6">Deletion of the gene in vancomycin-resistant strain V587 leads to significant defects in bladder colonization and in spreading to bloodstream in the mouse model of catheter-associated urinary tract infection (CAUTI). Double deletion of hylA and hylB genes in the same strain leads to a significant colonization defect in both the kidneys and the spleen in the mouse model of bacteremia.</text>
</comment>
<comment type="similarity">
    <text evidence="8">Belongs to the polysaccharide lyase 8 family.</text>
</comment>
<gene>
    <name evidence="7" type="primary">hylA</name>
    <name evidence="7 10" type="ordered locus">EF_3023</name>
</gene>
<feature type="signal peptide" evidence="1">
    <location>
        <begin position="1"/>
        <end position="25"/>
    </location>
</feature>
<feature type="chain" id="PRO_5039593726" description="Polysaccharide lyase 8 family protein HylA" evidence="1">
    <location>
        <begin position="26"/>
        <end position="1341"/>
    </location>
</feature>
<feature type="propeptide" id="PRO_0000461446" description="Removed by sortase" evidence="4">
    <location>
        <begin position="1342"/>
        <end position="1372"/>
    </location>
</feature>
<feature type="domain" description="F5/8 type C" evidence="3">
    <location>
        <begin position="63"/>
        <end position="172"/>
    </location>
</feature>
<feature type="domain" description="BIG2" evidence="1">
    <location>
        <begin position="183"/>
        <end position="242"/>
    </location>
</feature>
<feature type="domain" description="FIVAR 1" evidence="1">
    <location>
        <begin position="1014"/>
        <end position="1075"/>
    </location>
</feature>
<feature type="domain" description="FIVAR 2" evidence="1">
    <location>
        <begin position="1084"/>
        <end position="1146"/>
    </location>
</feature>
<feature type="domain" description="FIVAR 3" evidence="1">
    <location>
        <begin position="1155"/>
        <end position="1217"/>
    </location>
</feature>
<feature type="domain" description="FIVAR 4" evidence="1">
    <location>
        <begin position="1226"/>
        <end position="1288"/>
    </location>
</feature>
<feature type="region of interest" description="Disordered" evidence="5">
    <location>
        <begin position="1288"/>
        <end position="1336"/>
    </location>
</feature>
<feature type="short sequence motif" description="LPXTG sorting signal" evidence="4">
    <location>
        <begin position="1338"/>
        <end position="1342"/>
    </location>
</feature>
<feature type="compositionally biased region" description="Polar residues" evidence="5">
    <location>
        <begin position="1308"/>
        <end position="1329"/>
    </location>
</feature>
<feature type="active site" evidence="2">
    <location>
        <position position="487"/>
    </location>
</feature>
<feature type="active site" evidence="2">
    <location>
        <position position="496"/>
    </location>
</feature>
<feature type="active site" evidence="2">
    <location>
        <position position="550"/>
    </location>
</feature>
<feature type="modified residue" description="Pentaglycyl murein peptidoglycan amidated threonine" evidence="4">
    <location>
        <position position="1341"/>
    </location>
</feature>
<protein>
    <recommendedName>
        <fullName evidence="8">Polysaccharide lyase 8 family protein HylA</fullName>
        <ecNumber evidence="8">4.2.2.-</ecNumber>
    </recommendedName>
</protein>
<sequence>MIKKIIVVVAFMLTGFSLTAMSASAEEITDLFLQKEVTYSGVEGGKIGENWKYPQFVGEKAVDGDETTRWSADKQDEQWLIVDLGEVKNIGELVLQLHAESPVYEILVSTDGESYQSIFKEENGKGGQPTKKYIDGNNVQARFVKYQQMKMWQHTNKQFYSSSIISFEAYEKKRLPEAIKLLTENLTISEKRKQQLAFEVSPAGVDITEDQIEWSSSDPTIVTVDQTGNLTAVKSGEAKVTVKIKGTEISDTIPVTVVAENKQYAEMRAKWKMRLLGTTQYDNDADVQQYRAQIATESLALWQTLNQAADREYLWERKPSDTVSADYTTQFTNIKKLALGYYEPSSELFEKPEVYDAIVKGIEFMIDTKKYNGTYYTGNWWDWQIGSAQPLTDTLILLHDDLLNTDAEKLNKFTAPLMLYAKDPNIQWPIYRATGANLTDISITVLGTGLLLEDNQRLVQVQEAVPSVLKSVSSGDGLYPDGSLIQHGYFPYNGSYGNELLKGFGRIQTILQGSDWEMNDPNISNLFNVVDKGYLQLMVNGKMPSMVSGRSISRAPETNPFTTEFESGKETIANLTLIAKFAPENLRNDIYTSIQTWLQQSGSYYHFFKKPRDFEALIDLKNVVNSASPAQATPMQSLNVYGSMDRVLQKNNEYAVGISMYSQRVGNYEFGNTENKKGWHTADGMLYLYNQDFAQFDEGYWATIDPYRLPGTTVDTRELANGAYTGKRSPQSWVGGSNNGQVASIGMFLDKSNEGMNLVAKKSWFLLDGQIINLGSGITGTTDASIETILDNRMIHPQEVKLNQGSDKDNSWISLSAANPLNNIGYVFPNSMNTLDVQIEERSGRYGDINEYFVNDKTYTNTFAKISKNYGKTVENGTYEYLTVVGKTNEEIAALSKNKGYTVLENTANLQAIEAGNYVMMNTWNNDQEIAGLYAYDPMSVISEKIDNGVYRLTLANPLQNNASVSIEFDKGILEVVAADPEISVDQNIITLNSAGLNGSSRSIIVKTTPEVTKEALEKLIQEQKEHQEKDYTASSWKVYSEALKQAQTVADQTTATQAEVDQAETELRSAVKQLVKVPTKEVDKTNLLKIIKENEKHQEKDYTASSWKVYSEALKQAQTVADQTTATQAEVDQAEAKLRSAVKQLVKVPTKEVDKTNLLKIIKENEKHQEKDYTASSWKVYSEALKQAQTVADQTTATQAEVDQAETELRSAVKQLVKVPTKEVDKTNLLKIIKENEKHQEKDYTASSWKVYSEALKQAQTVADQTTATQAEVDQAEAKLRSAVKRLTLKNSGENKKEQKNGGNNGHLNTSTGVDQTGTKQVKPSSQGGFRKASQFLPSTGEKKSIALVIIGLLVIASGCLLVFRKSKSKK</sequence>
<name>HYLA_ENTFA</name>
<reference evidence="10 11" key="1">
    <citation type="journal article" date="2003" name="Science">
        <title>Role of mobile DNA in the evolution of vancomycin-resistant Enterococcus faecalis.</title>
        <authorList>
            <person name="Paulsen I.T."/>
            <person name="Banerjei L."/>
            <person name="Myers G.S.A."/>
            <person name="Nelson K.E."/>
            <person name="Seshadri R."/>
            <person name="Read T.D."/>
            <person name="Fouts D.E."/>
            <person name="Eisen J.A."/>
            <person name="Gill S.R."/>
            <person name="Heidelberg J.F."/>
            <person name="Tettelin H."/>
            <person name="Dodson R.J."/>
            <person name="Umayam L.A."/>
            <person name="Brinkac L.M."/>
            <person name="Beanan M.J."/>
            <person name="Daugherty S.C."/>
            <person name="DeBoy R.T."/>
            <person name="Durkin S.A."/>
            <person name="Kolonay J.F."/>
            <person name="Madupu R."/>
            <person name="Nelson W.C."/>
            <person name="Vamathevan J.J."/>
            <person name="Tran B."/>
            <person name="Upton J."/>
            <person name="Hansen T."/>
            <person name="Shetty J."/>
            <person name="Khouri H.M."/>
            <person name="Utterback T.R."/>
            <person name="Radune D."/>
            <person name="Ketchum K.A."/>
            <person name="Dougherty B.A."/>
            <person name="Fraser C.M."/>
        </authorList>
    </citation>
    <scope>NUCLEOTIDE SEQUENCE [LARGE SCALE GENOMIC DNA]</scope>
    <source>
        <strain evidence="11">ATCC 700802 / V583</strain>
    </source>
</reference>
<reference key="2">
    <citation type="journal article" date="2024" name="Infect. Immun.">
        <title>Function and contribution of two putative Enterococcus faecalis glycosaminoglycan degrading enzymes to bacteremia and catheter-associated urinary tract infection.</title>
        <authorList>
            <person name="Johnson A.O."/>
            <person name="Shipman B.M."/>
            <person name="Hunt B.C."/>
            <person name="Learman B.S."/>
            <person name="Brauer A.L."/>
            <person name="Zhou S.P."/>
            <person name="Hageman Blair R."/>
            <person name="De Nisco N.J."/>
            <person name="Armbruster C.E."/>
        </authorList>
    </citation>
    <scope>FUNCTION</scope>
    <scope>SUBCELLULAR LOCATION</scope>
    <scope>INDUCTION</scope>
    <scope>DISRUPTION PHENOTYPE</scope>
    <source>
        <strain evidence="7">V587</strain>
    </source>
</reference>
<keyword id="KW-0134">Cell wall</keyword>
<keyword id="KW-0456">Lyase</keyword>
<keyword id="KW-0572">Peptidoglycan-anchor</keyword>
<keyword id="KW-1185">Reference proteome</keyword>
<keyword id="KW-0677">Repeat</keyword>
<keyword id="KW-0964">Secreted</keyword>
<keyword id="KW-0732">Signal</keyword>
<keyword id="KW-0843">Virulence</keyword>
<proteinExistence type="evidence at transcript level"/>
<evidence type="ECO:0000255" key="1"/>
<evidence type="ECO:0000255" key="2">
    <source>
        <dbReference type="PIRSR" id="PIRSR638970-1"/>
    </source>
</evidence>
<evidence type="ECO:0000255" key="3">
    <source>
        <dbReference type="PROSITE-ProRule" id="PRU00081"/>
    </source>
</evidence>
<evidence type="ECO:0000255" key="4">
    <source>
        <dbReference type="PROSITE-ProRule" id="PRU00477"/>
    </source>
</evidence>
<evidence type="ECO:0000256" key="5">
    <source>
        <dbReference type="SAM" id="MobiDB-lite"/>
    </source>
</evidence>
<evidence type="ECO:0000269" key="6">
    <source>
    </source>
</evidence>
<evidence type="ECO:0000303" key="7">
    <source>
    </source>
</evidence>
<evidence type="ECO:0000305" key="8"/>
<evidence type="ECO:0000305" key="9">
    <source>
    </source>
</evidence>
<evidence type="ECO:0000312" key="10">
    <source>
        <dbReference type="EMBL" id="AAO82707.1"/>
    </source>
</evidence>
<evidence type="ECO:0000312" key="11">
    <source>
        <dbReference type="Proteomes" id="UP000001415"/>
    </source>
</evidence>
<dbReference type="EC" id="4.2.2.-" evidence="8"/>
<dbReference type="EMBL" id="AE016830">
    <property type="protein sequence ID" value="AAO82707.1"/>
    <property type="molecule type" value="Genomic_DNA"/>
</dbReference>
<dbReference type="RefSeq" id="NP_816637.1">
    <property type="nucleotide sequence ID" value="NC_004668.1"/>
</dbReference>
<dbReference type="RefSeq" id="WP_011109578.1">
    <property type="nucleotide sequence ID" value="NZ_KE136524.1"/>
</dbReference>
<dbReference type="SMR" id="Q82ZM8"/>
<dbReference type="STRING" id="226185.EF_3023"/>
<dbReference type="CAZy" id="CBM32">
    <property type="family name" value="Carbohydrate-Binding Module Family 32"/>
</dbReference>
<dbReference type="CAZy" id="PL8">
    <property type="family name" value="Polysaccharide Lyase Family 8"/>
</dbReference>
<dbReference type="EnsemblBacteria" id="AAO82707">
    <property type="protein sequence ID" value="AAO82707"/>
    <property type="gene ID" value="EF_3023"/>
</dbReference>
<dbReference type="KEGG" id="efa:EF3023"/>
<dbReference type="PATRIC" id="fig|226185.46.peg.130"/>
<dbReference type="eggNOG" id="COG1196">
    <property type="taxonomic scope" value="Bacteria"/>
</dbReference>
<dbReference type="eggNOG" id="COG5492">
    <property type="taxonomic scope" value="Bacteria"/>
</dbReference>
<dbReference type="HOGENOM" id="CLU_004172_1_1_9"/>
<dbReference type="Proteomes" id="UP000001415">
    <property type="component" value="Chromosome"/>
</dbReference>
<dbReference type="GO" id="GO:0005576">
    <property type="term" value="C:extracellular region"/>
    <property type="evidence" value="ECO:0000305"/>
    <property type="project" value="UniProtKB"/>
</dbReference>
<dbReference type="GO" id="GO:0030246">
    <property type="term" value="F:carbohydrate binding"/>
    <property type="evidence" value="ECO:0007669"/>
    <property type="project" value="InterPro"/>
</dbReference>
<dbReference type="GO" id="GO:0016837">
    <property type="term" value="F:carbon-oxygen lyase activity, acting on polysaccharides"/>
    <property type="evidence" value="ECO:0000314"/>
    <property type="project" value="UniProtKB"/>
</dbReference>
<dbReference type="GO" id="GO:0005975">
    <property type="term" value="P:carbohydrate metabolic process"/>
    <property type="evidence" value="ECO:0007669"/>
    <property type="project" value="InterPro"/>
</dbReference>
<dbReference type="CDD" id="cd01083">
    <property type="entry name" value="GAG_Lyase"/>
    <property type="match status" value="1"/>
</dbReference>
<dbReference type="Gene3D" id="2.60.40.1080">
    <property type="match status" value="1"/>
</dbReference>
<dbReference type="Gene3D" id="2.70.98.10">
    <property type="match status" value="1"/>
</dbReference>
<dbReference type="Gene3D" id="1.50.10.100">
    <property type="entry name" value="Chondroitin AC/alginate lyase"/>
    <property type="match status" value="1"/>
</dbReference>
<dbReference type="Gene3D" id="1.20.1270.70">
    <property type="entry name" value="Designed single chain three-helix bundle"/>
    <property type="match status" value="4"/>
</dbReference>
<dbReference type="Gene3D" id="2.60.120.260">
    <property type="entry name" value="Galactose-binding domain-like"/>
    <property type="match status" value="1"/>
</dbReference>
<dbReference type="Gene3D" id="2.60.220.10">
    <property type="entry name" value="Polysaccharide lyase family 8-like, C-terminal"/>
    <property type="match status" value="1"/>
</dbReference>
<dbReference type="InterPro" id="IPR003343">
    <property type="entry name" value="Big_2"/>
</dbReference>
<dbReference type="InterPro" id="IPR008929">
    <property type="entry name" value="Chondroitin_lyas"/>
</dbReference>
<dbReference type="InterPro" id="IPR000421">
    <property type="entry name" value="FA58C"/>
</dbReference>
<dbReference type="InterPro" id="IPR011013">
    <property type="entry name" value="Gal_mutarotase_sf_dom"/>
</dbReference>
<dbReference type="InterPro" id="IPR008979">
    <property type="entry name" value="Galactose-bd-like_sf"/>
</dbReference>
<dbReference type="InterPro" id="IPR014718">
    <property type="entry name" value="GH-type_carb-bd"/>
</dbReference>
<dbReference type="InterPro" id="IPR008964">
    <property type="entry name" value="Invasin/intimin_cell_adhesion"/>
</dbReference>
<dbReference type="InterPro" id="IPR019931">
    <property type="entry name" value="LPXTG_anchor"/>
</dbReference>
<dbReference type="InterPro" id="IPR038970">
    <property type="entry name" value="Lyase_8"/>
</dbReference>
<dbReference type="InterPro" id="IPR011071">
    <property type="entry name" value="Lyase_8-like_C"/>
</dbReference>
<dbReference type="InterPro" id="IPR012970">
    <property type="entry name" value="Lyase_8_alpha_N"/>
</dbReference>
<dbReference type="InterPro" id="IPR004103">
    <property type="entry name" value="Lyase_8_C"/>
</dbReference>
<dbReference type="InterPro" id="IPR003159">
    <property type="entry name" value="Lyase_8_central_dom"/>
</dbReference>
<dbReference type="NCBIfam" id="TIGR01167">
    <property type="entry name" value="LPXTG_anchor"/>
    <property type="match status" value="1"/>
</dbReference>
<dbReference type="PANTHER" id="PTHR38481">
    <property type="entry name" value="HYALURONATE LYASE"/>
    <property type="match status" value="1"/>
</dbReference>
<dbReference type="PANTHER" id="PTHR38481:SF1">
    <property type="entry name" value="HYALURONATE LYASE"/>
    <property type="match status" value="1"/>
</dbReference>
<dbReference type="Pfam" id="PF02368">
    <property type="entry name" value="Big_2"/>
    <property type="match status" value="1"/>
</dbReference>
<dbReference type="Pfam" id="PF00754">
    <property type="entry name" value="F5_F8_type_C"/>
    <property type="match status" value="1"/>
</dbReference>
<dbReference type="Pfam" id="PF07554">
    <property type="entry name" value="FIVAR"/>
    <property type="match status" value="4"/>
</dbReference>
<dbReference type="Pfam" id="PF00746">
    <property type="entry name" value="Gram_pos_anchor"/>
    <property type="match status" value="1"/>
</dbReference>
<dbReference type="Pfam" id="PF02278">
    <property type="entry name" value="Lyase_8"/>
    <property type="match status" value="1"/>
</dbReference>
<dbReference type="Pfam" id="PF02884">
    <property type="entry name" value="Lyase_8_C"/>
    <property type="match status" value="1"/>
</dbReference>
<dbReference type="Pfam" id="PF08124">
    <property type="entry name" value="Lyase_8_N"/>
    <property type="match status" value="1"/>
</dbReference>
<dbReference type="SMART" id="SM00635">
    <property type="entry name" value="BID_2"/>
    <property type="match status" value="1"/>
</dbReference>
<dbReference type="SUPFAM" id="SSF48230">
    <property type="entry name" value="Chondroitin AC/alginate lyase"/>
    <property type="match status" value="1"/>
</dbReference>
<dbReference type="SUPFAM" id="SSF74650">
    <property type="entry name" value="Galactose mutarotase-like"/>
    <property type="match status" value="1"/>
</dbReference>
<dbReference type="SUPFAM" id="SSF49785">
    <property type="entry name" value="Galactose-binding domain-like"/>
    <property type="match status" value="1"/>
</dbReference>
<dbReference type="SUPFAM" id="SSF49863">
    <property type="entry name" value="Hyaluronate lyase-like, C-terminal domain"/>
    <property type="match status" value="1"/>
</dbReference>
<dbReference type="SUPFAM" id="SSF49373">
    <property type="entry name" value="Invasin/intimin cell-adhesion fragments"/>
    <property type="match status" value="1"/>
</dbReference>
<dbReference type="PROSITE" id="PS50022">
    <property type="entry name" value="FA58C_3"/>
    <property type="match status" value="1"/>
</dbReference>
<dbReference type="PROSITE" id="PS50847">
    <property type="entry name" value="GRAM_POS_ANCHORING"/>
    <property type="match status" value="1"/>
</dbReference>